<name>TPIS_HISS2</name>
<proteinExistence type="inferred from homology"/>
<organism>
    <name type="scientific">Histophilus somni (strain 2336)</name>
    <name type="common">Haemophilus somnus</name>
    <dbReference type="NCBI Taxonomy" id="228400"/>
    <lineage>
        <taxon>Bacteria</taxon>
        <taxon>Pseudomonadati</taxon>
        <taxon>Pseudomonadota</taxon>
        <taxon>Gammaproteobacteria</taxon>
        <taxon>Pasteurellales</taxon>
        <taxon>Pasteurellaceae</taxon>
        <taxon>Histophilus</taxon>
    </lineage>
</organism>
<comment type="function">
    <text evidence="1">Involved in the gluconeogenesis. Catalyzes stereospecifically the conversion of dihydroxyacetone phosphate (DHAP) to D-glyceraldehyde-3-phosphate (G3P).</text>
</comment>
<comment type="catalytic activity">
    <reaction evidence="1">
        <text>D-glyceraldehyde 3-phosphate = dihydroxyacetone phosphate</text>
        <dbReference type="Rhea" id="RHEA:18585"/>
        <dbReference type="ChEBI" id="CHEBI:57642"/>
        <dbReference type="ChEBI" id="CHEBI:59776"/>
        <dbReference type="EC" id="5.3.1.1"/>
    </reaction>
</comment>
<comment type="pathway">
    <text evidence="1">Carbohydrate biosynthesis; gluconeogenesis.</text>
</comment>
<comment type="pathway">
    <text evidence="1">Carbohydrate degradation; glycolysis; D-glyceraldehyde 3-phosphate from glycerone phosphate: step 1/1.</text>
</comment>
<comment type="subunit">
    <text evidence="1">Homodimer.</text>
</comment>
<comment type="subcellular location">
    <subcellularLocation>
        <location evidence="1">Cytoplasm</location>
    </subcellularLocation>
</comment>
<comment type="similarity">
    <text evidence="1">Belongs to the triosephosphate isomerase family.</text>
</comment>
<evidence type="ECO:0000255" key="1">
    <source>
        <dbReference type="HAMAP-Rule" id="MF_00147"/>
    </source>
</evidence>
<protein>
    <recommendedName>
        <fullName evidence="1">Triosephosphate isomerase</fullName>
        <shortName evidence="1">TIM</shortName>
        <shortName evidence="1">TPI</shortName>
        <ecNumber evidence="1">5.3.1.1</ecNumber>
    </recommendedName>
    <alternativeName>
        <fullName evidence="1">Triose-phosphate isomerase</fullName>
    </alternativeName>
</protein>
<feature type="chain" id="PRO_1000076651" description="Triosephosphate isomerase">
    <location>
        <begin position="1"/>
        <end position="255"/>
    </location>
</feature>
<feature type="active site" description="Electrophile" evidence="1">
    <location>
        <position position="96"/>
    </location>
</feature>
<feature type="active site" description="Proton acceptor" evidence="1">
    <location>
        <position position="168"/>
    </location>
</feature>
<feature type="binding site" evidence="1">
    <location>
        <begin position="10"/>
        <end position="12"/>
    </location>
    <ligand>
        <name>substrate</name>
    </ligand>
</feature>
<feature type="binding site" evidence="1">
    <location>
        <position position="174"/>
    </location>
    <ligand>
        <name>substrate</name>
    </ligand>
</feature>
<feature type="binding site" evidence="1">
    <location>
        <position position="213"/>
    </location>
    <ligand>
        <name>substrate</name>
    </ligand>
</feature>
<feature type="binding site" evidence="1">
    <location>
        <begin position="234"/>
        <end position="235"/>
    </location>
    <ligand>
        <name>substrate</name>
    </ligand>
</feature>
<dbReference type="EC" id="5.3.1.1" evidence="1"/>
<dbReference type="EMBL" id="CP000947">
    <property type="protein sequence ID" value="ACA32064.1"/>
    <property type="molecule type" value="Genomic_DNA"/>
</dbReference>
<dbReference type="RefSeq" id="WP_012341263.1">
    <property type="nucleotide sequence ID" value="NC_010519.1"/>
</dbReference>
<dbReference type="SMR" id="B0URI5"/>
<dbReference type="STRING" id="228400.HSM_0420"/>
<dbReference type="GeneID" id="31486700"/>
<dbReference type="KEGG" id="hsm:HSM_0420"/>
<dbReference type="HOGENOM" id="CLU_024251_2_1_6"/>
<dbReference type="UniPathway" id="UPA00109">
    <property type="reaction ID" value="UER00189"/>
</dbReference>
<dbReference type="UniPathway" id="UPA00138"/>
<dbReference type="GO" id="GO:0005829">
    <property type="term" value="C:cytosol"/>
    <property type="evidence" value="ECO:0007669"/>
    <property type="project" value="TreeGrafter"/>
</dbReference>
<dbReference type="GO" id="GO:0004807">
    <property type="term" value="F:triose-phosphate isomerase activity"/>
    <property type="evidence" value="ECO:0007669"/>
    <property type="project" value="UniProtKB-UniRule"/>
</dbReference>
<dbReference type="GO" id="GO:0006094">
    <property type="term" value="P:gluconeogenesis"/>
    <property type="evidence" value="ECO:0007669"/>
    <property type="project" value="UniProtKB-UniRule"/>
</dbReference>
<dbReference type="GO" id="GO:0046166">
    <property type="term" value="P:glyceraldehyde-3-phosphate biosynthetic process"/>
    <property type="evidence" value="ECO:0007669"/>
    <property type="project" value="TreeGrafter"/>
</dbReference>
<dbReference type="GO" id="GO:0019563">
    <property type="term" value="P:glycerol catabolic process"/>
    <property type="evidence" value="ECO:0007669"/>
    <property type="project" value="TreeGrafter"/>
</dbReference>
<dbReference type="GO" id="GO:0006096">
    <property type="term" value="P:glycolytic process"/>
    <property type="evidence" value="ECO:0007669"/>
    <property type="project" value="UniProtKB-UniRule"/>
</dbReference>
<dbReference type="CDD" id="cd00311">
    <property type="entry name" value="TIM"/>
    <property type="match status" value="1"/>
</dbReference>
<dbReference type="FunFam" id="3.20.20.70:FF:000020">
    <property type="entry name" value="Triosephosphate isomerase"/>
    <property type="match status" value="1"/>
</dbReference>
<dbReference type="Gene3D" id="3.20.20.70">
    <property type="entry name" value="Aldolase class I"/>
    <property type="match status" value="1"/>
</dbReference>
<dbReference type="HAMAP" id="MF_00147_B">
    <property type="entry name" value="TIM_B"/>
    <property type="match status" value="1"/>
</dbReference>
<dbReference type="InterPro" id="IPR013785">
    <property type="entry name" value="Aldolase_TIM"/>
</dbReference>
<dbReference type="InterPro" id="IPR035990">
    <property type="entry name" value="TIM_sf"/>
</dbReference>
<dbReference type="InterPro" id="IPR022896">
    <property type="entry name" value="TrioseP_Isoase_bac/euk"/>
</dbReference>
<dbReference type="InterPro" id="IPR000652">
    <property type="entry name" value="Triosephosphate_isomerase"/>
</dbReference>
<dbReference type="InterPro" id="IPR020861">
    <property type="entry name" value="Triosephosphate_isomerase_AS"/>
</dbReference>
<dbReference type="NCBIfam" id="TIGR00419">
    <property type="entry name" value="tim"/>
    <property type="match status" value="1"/>
</dbReference>
<dbReference type="PANTHER" id="PTHR21139">
    <property type="entry name" value="TRIOSEPHOSPHATE ISOMERASE"/>
    <property type="match status" value="1"/>
</dbReference>
<dbReference type="PANTHER" id="PTHR21139:SF42">
    <property type="entry name" value="TRIOSEPHOSPHATE ISOMERASE"/>
    <property type="match status" value="1"/>
</dbReference>
<dbReference type="Pfam" id="PF00121">
    <property type="entry name" value="TIM"/>
    <property type="match status" value="1"/>
</dbReference>
<dbReference type="SUPFAM" id="SSF51351">
    <property type="entry name" value="Triosephosphate isomerase (TIM)"/>
    <property type="match status" value="1"/>
</dbReference>
<dbReference type="PROSITE" id="PS00171">
    <property type="entry name" value="TIM_1"/>
    <property type="match status" value="1"/>
</dbReference>
<dbReference type="PROSITE" id="PS51440">
    <property type="entry name" value="TIM_2"/>
    <property type="match status" value="1"/>
</dbReference>
<gene>
    <name evidence="1" type="primary">tpiA</name>
    <name type="ordered locus">HSM_0420</name>
</gene>
<sequence>MARRPLVMGNWKLNGSKAFTKELITGLKDELNAVSGCDVAIAPPVMYLAEAEAALVSSDIALGTQNVDLNKQGAFTGDISTEMLKDFGVKYVIIGHSERRQYHHESDEFIAKKFGVLKDAGLVPVLCIGESEAENEAGKTEEVCARQIDAVMNTLGVEAFNGAVIAYEPIWAIGTGKSATPAQAQAVHAFIRGHIAKQSQAVAERVIIQYGGSINDANAAELFTQPDIDGALVGGASLKASAFAVIVKAAAKAKN</sequence>
<keyword id="KW-0963">Cytoplasm</keyword>
<keyword id="KW-0312">Gluconeogenesis</keyword>
<keyword id="KW-0324">Glycolysis</keyword>
<keyword id="KW-0413">Isomerase</keyword>
<reference key="1">
    <citation type="submission" date="2008-02" db="EMBL/GenBank/DDBJ databases">
        <title>Complete sequence of Haemophilus somnus 2336.</title>
        <authorList>
            <consortium name="US DOE Joint Genome Institute"/>
            <person name="Siddaramappa S."/>
            <person name="Duncan A.J."/>
            <person name="Challacombe J.F."/>
            <person name="Rainey D."/>
            <person name="Gillaspy A.F."/>
            <person name="Carson M."/>
            <person name="Gipson J."/>
            <person name="Gipson M."/>
            <person name="Bruce D."/>
            <person name="Detter J.C."/>
            <person name="Han C.S."/>
            <person name="Land M."/>
            <person name="Tapia R."/>
            <person name="Thompson L.S."/>
            <person name="Orvis J."/>
            <person name="Zaitshik J."/>
            <person name="Barnes G."/>
            <person name="Brettin T.S."/>
            <person name="Dyer D.W."/>
            <person name="Inzana T.J."/>
        </authorList>
    </citation>
    <scope>NUCLEOTIDE SEQUENCE [LARGE SCALE GENOMIC DNA]</scope>
    <source>
        <strain>2336</strain>
    </source>
</reference>
<accession>B0URI5</accession>